<sequence length="87" mass="9817">MRLILSLPVLAVVLAMVLEGPAPAQADPHISSSLESIPGKLKEFGSTVEEKFRTAIDHIKKSEFSEKTQNWFSELFHKVKEKFETTF</sequence>
<organism>
    <name type="scientific">Pteropus vampyrus</name>
    <name type="common">Large flying fox</name>
    <dbReference type="NCBI Taxonomy" id="132908"/>
    <lineage>
        <taxon>Eukaryota</taxon>
        <taxon>Metazoa</taxon>
        <taxon>Chordata</taxon>
        <taxon>Craniata</taxon>
        <taxon>Vertebrata</taxon>
        <taxon>Euteleostomi</taxon>
        <taxon>Mammalia</taxon>
        <taxon>Eutheria</taxon>
        <taxon>Laurasiatheria</taxon>
        <taxon>Chiroptera</taxon>
        <taxon>Yinpterochiroptera</taxon>
        <taxon>Pteropodoidea</taxon>
        <taxon>Pteropodidae</taxon>
        <taxon>Pteropodinae</taxon>
        <taxon>Pteropus</taxon>
    </lineage>
</organism>
<evidence type="ECO:0000250" key="1">
    <source>
        <dbReference type="UniProtKB" id="P02654"/>
    </source>
</evidence>
<evidence type="ECO:0000250" key="2">
    <source>
        <dbReference type="UniProtKB" id="P33047"/>
    </source>
</evidence>
<evidence type="ECO:0000250" key="3">
    <source>
        <dbReference type="UniProtKB" id="P86336"/>
    </source>
</evidence>
<evidence type="ECO:0000255" key="4"/>
<evidence type="ECO:0000305" key="5"/>
<proteinExistence type="inferred from homology"/>
<comment type="function">
    <text evidence="1 2">Inhibitor of lipoprotein binding to the low density lipoprotein (LDL) receptor, LDL receptor-related protein, and very low density lipoprotein (VLDL) receptor. Associates with high density lipoproteins (HDL) and the triacylglycerol-rich lipoproteins in the plasma and makes up about 10% of the protein of the VLDL and 2% of that of HDL. Appears to interfere directly with fatty acid uptake and is also the major plasma inhibitor of cholesteryl ester transfer protein (CETP). Binds free fatty acids and reduces their intracellular esterification. Modulates the interaction of APOE with beta-migrating VLDL and inhibits binding of beta-VLDL to the LDL receptor-related protein.</text>
</comment>
<comment type="subcellular location">
    <subcellularLocation>
        <location evidence="1">Secreted</location>
    </subcellularLocation>
</comment>
<comment type="similarity">
    <text evidence="5">Belongs to the apolipoprotein C1 family.</text>
</comment>
<keyword id="KW-0445">Lipid transport</keyword>
<keyword id="KW-1185">Reference proteome</keyword>
<keyword id="KW-0964">Secreted</keyword>
<keyword id="KW-0732">Signal</keyword>
<keyword id="KW-0813">Transport</keyword>
<keyword id="KW-0850">VLDL</keyword>
<dbReference type="EMBL" id="CACVBW010000000">
    <property type="status" value="NOT_ANNOTATED_CDS"/>
    <property type="molecule type" value="Genomic_DNA"/>
</dbReference>
<dbReference type="RefSeq" id="XP_011366269.1">
    <property type="nucleotide sequence ID" value="XM_011367967.2"/>
</dbReference>
<dbReference type="RefSeq" id="XP_011366270.1">
    <property type="nucleotide sequence ID" value="XM_011367968.2"/>
</dbReference>
<dbReference type="RefSeq" id="XP_023391125.1">
    <property type="nucleotide sequence ID" value="XM_023535357.1"/>
</dbReference>
<dbReference type="RefSeq" id="XP_039722107.1">
    <property type="nucleotide sequence ID" value="XM_039866173.1"/>
</dbReference>
<dbReference type="SMR" id="P0DTG7"/>
<dbReference type="GeneID" id="105297352"/>
<dbReference type="GeneID" id="120605276"/>
<dbReference type="Proteomes" id="UP000515202">
    <property type="component" value="Unplaced"/>
</dbReference>
<dbReference type="GO" id="GO:0034364">
    <property type="term" value="C:high-density lipoprotein particle"/>
    <property type="evidence" value="ECO:0007669"/>
    <property type="project" value="TreeGrafter"/>
</dbReference>
<dbReference type="GO" id="GO:0034361">
    <property type="term" value="C:very-low-density lipoprotein particle"/>
    <property type="evidence" value="ECO:0007669"/>
    <property type="project" value="UniProtKB-KW"/>
</dbReference>
<dbReference type="GO" id="GO:0005504">
    <property type="term" value="F:fatty acid binding"/>
    <property type="evidence" value="ECO:0007669"/>
    <property type="project" value="TreeGrafter"/>
</dbReference>
<dbReference type="GO" id="GO:0004859">
    <property type="term" value="F:phospholipase inhibitor activity"/>
    <property type="evidence" value="ECO:0007669"/>
    <property type="project" value="TreeGrafter"/>
</dbReference>
<dbReference type="GO" id="GO:0006869">
    <property type="term" value="P:lipid transport"/>
    <property type="evidence" value="ECO:0007669"/>
    <property type="project" value="UniProtKB-KW"/>
</dbReference>
<dbReference type="GO" id="GO:0042157">
    <property type="term" value="P:lipoprotein metabolic process"/>
    <property type="evidence" value="ECO:0007669"/>
    <property type="project" value="InterPro"/>
</dbReference>
<dbReference type="GO" id="GO:0032375">
    <property type="term" value="P:negative regulation of cholesterol transport"/>
    <property type="evidence" value="ECO:0007669"/>
    <property type="project" value="TreeGrafter"/>
</dbReference>
<dbReference type="GO" id="GO:0050995">
    <property type="term" value="P:negative regulation of lipid catabolic process"/>
    <property type="evidence" value="ECO:0007669"/>
    <property type="project" value="TreeGrafter"/>
</dbReference>
<dbReference type="GO" id="GO:0010916">
    <property type="term" value="P:negative regulation of very-low-density lipoprotein particle clearance"/>
    <property type="evidence" value="ECO:0007669"/>
    <property type="project" value="TreeGrafter"/>
</dbReference>
<dbReference type="GO" id="GO:0006641">
    <property type="term" value="P:triglyceride metabolic process"/>
    <property type="evidence" value="ECO:0007669"/>
    <property type="project" value="TreeGrafter"/>
</dbReference>
<dbReference type="GO" id="GO:0034447">
    <property type="term" value="P:very-low-density lipoprotein particle clearance"/>
    <property type="evidence" value="ECO:0007669"/>
    <property type="project" value="TreeGrafter"/>
</dbReference>
<dbReference type="Gene3D" id="4.10.260.30">
    <property type="entry name" value="Apolipoprotein C-I"/>
    <property type="match status" value="1"/>
</dbReference>
<dbReference type="InterPro" id="IPR043081">
    <property type="entry name" value="ApoC-1_sf"/>
</dbReference>
<dbReference type="InterPro" id="IPR006781">
    <property type="entry name" value="ApoC-I"/>
</dbReference>
<dbReference type="PANTHER" id="PTHR16565">
    <property type="entry name" value="APOLIPOPROTEIN C-I"/>
    <property type="match status" value="1"/>
</dbReference>
<dbReference type="PANTHER" id="PTHR16565:SF2">
    <property type="entry name" value="APOLIPOPROTEIN C-I"/>
    <property type="match status" value="1"/>
</dbReference>
<dbReference type="Pfam" id="PF04691">
    <property type="entry name" value="ApoC-I"/>
    <property type="match status" value="1"/>
</dbReference>
<accession>P0DTG7</accession>
<gene>
    <name type="primary">APOC1</name>
</gene>
<reference key="1">
    <citation type="journal article" date="2020" name="Front. Microbiol.">
        <title>Sequencing the Genome of Indian Flying Fox, Natural Reservoir of Nipah Virus, Using Hybrid Assembly and Conservative Secondary Scaffolding.</title>
        <authorList>
            <person name="Fouret J."/>
            <person name="Brunet F.G."/>
            <person name="Binet M."/>
            <person name="Aurine N."/>
            <person name="Enchery F."/>
            <person name="Croze S."/>
            <person name="Guinier M."/>
            <person name="Goumaidi A."/>
            <person name="Preininger D."/>
            <person name="Volff J.N."/>
            <person name="Bailly-Bechet M."/>
            <person name="Lachuer J."/>
            <person name="Horvat B."/>
            <person name="Legras-Lachuer C."/>
        </authorList>
    </citation>
    <scope>NUCLEOTIDE SEQUENCE [LARGE SCALE GENOMIC DNA]</scope>
</reference>
<reference key="2">
    <citation type="unpublished observations" date="2021-01">
        <authorList>
            <person name="Puppione D.L."/>
        </authorList>
    </citation>
    <scope>IDENTIFICATION</scope>
</reference>
<feature type="signal peptide" evidence="4">
    <location>
        <begin position="1"/>
        <end position="26"/>
    </location>
</feature>
<feature type="chain" id="PRO_0000452419" description="Apolipoprotein C-I">
    <location>
        <begin position="27"/>
        <end position="87"/>
    </location>
</feature>
<feature type="chain" id="PRO_0000452420" description="Truncated apolipoprotein C-I" evidence="3">
    <location>
        <begin position="29"/>
        <end position="87"/>
    </location>
</feature>
<protein>
    <recommendedName>
        <fullName>Apolipoprotein C-I</fullName>
        <shortName>Apo-CI</shortName>
        <shortName>ApoC-I</shortName>
    </recommendedName>
    <alternativeName>
        <fullName>Apolipoprotein C1</fullName>
    </alternativeName>
    <component>
        <recommendedName>
            <fullName>Truncated apolipoprotein C-I</fullName>
        </recommendedName>
    </component>
</protein>
<name>APOC1_PTEVA</name>